<gene>
    <name evidence="5" type="primary">ERF1-2</name>
</gene>
<protein>
    <recommendedName>
        <fullName evidence="5">Eukaryotic peptide chain release factor subunit 1-2</fullName>
        <shortName evidence="4">BoeRF1-2</shortName>
        <shortName evidence="4">Eukaryotic release factor 1-2</shortName>
    </recommendedName>
</protein>
<proteinExistence type="evidence at protein level"/>
<evidence type="ECO:0000250" key="1">
    <source>
        <dbReference type="UniProtKB" id="Q39097"/>
    </source>
</evidence>
<evidence type="ECO:0000250" key="2">
    <source>
        <dbReference type="UniProtKB" id="Q9LPV8"/>
    </source>
</evidence>
<evidence type="ECO:0000269" key="3">
    <source>
    </source>
</evidence>
<evidence type="ECO:0000303" key="4">
    <source>
    </source>
</evidence>
<evidence type="ECO:0000305" key="5"/>
<dbReference type="EMBL" id="GU183403">
    <property type="protein sequence ID" value="ACZ71034.1"/>
    <property type="molecule type" value="mRNA"/>
</dbReference>
<dbReference type="SMR" id="D2K759"/>
<dbReference type="GO" id="GO:0005737">
    <property type="term" value="C:cytoplasm"/>
    <property type="evidence" value="ECO:0007669"/>
    <property type="project" value="UniProtKB-SubCell"/>
</dbReference>
<dbReference type="GO" id="GO:0003747">
    <property type="term" value="F:translation release factor activity"/>
    <property type="evidence" value="ECO:0007669"/>
    <property type="project" value="InterPro"/>
</dbReference>
<dbReference type="FunFam" id="3.30.420.60:FF:000001">
    <property type="entry name" value="Eukaryotic peptide chain release factor subunit 1"/>
    <property type="match status" value="1"/>
</dbReference>
<dbReference type="FunFam" id="3.30.960.10:FF:000001">
    <property type="entry name" value="Eukaryotic peptide chain release factor subunit 1"/>
    <property type="match status" value="1"/>
</dbReference>
<dbReference type="FunFam" id="3.30.1330.30:FF:000006">
    <property type="entry name" value="Peptide chain release factor subunit 1"/>
    <property type="match status" value="1"/>
</dbReference>
<dbReference type="Gene3D" id="3.30.1330.30">
    <property type="match status" value="1"/>
</dbReference>
<dbReference type="Gene3D" id="3.30.960.10">
    <property type="entry name" value="eRF1 domain 1"/>
    <property type="match status" value="1"/>
</dbReference>
<dbReference type="Gene3D" id="3.30.420.60">
    <property type="entry name" value="eRF1 domain 2"/>
    <property type="match status" value="1"/>
</dbReference>
<dbReference type="InterPro" id="IPR042226">
    <property type="entry name" value="eFR1_2_sf"/>
</dbReference>
<dbReference type="InterPro" id="IPR005140">
    <property type="entry name" value="eRF1_1_Pelota"/>
</dbReference>
<dbReference type="InterPro" id="IPR024049">
    <property type="entry name" value="eRF1_1_sf"/>
</dbReference>
<dbReference type="InterPro" id="IPR005141">
    <property type="entry name" value="eRF1_2"/>
</dbReference>
<dbReference type="InterPro" id="IPR005142">
    <property type="entry name" value="eRF1_3"/>
</dbReference>
<dbReference type="InterPro" id="IPR004403">
    <property type="entry name" value="Peptide_chain-rel_eRF1/aRF1"/>
</dbReference>
<dbReference type="InterPro" id="IPR029064">
    <property type="entry name" value="Ribosomal_eL30-like_sf"/>
</dbReference>
<dbReference type="NCBIfam" id="TIGR03676">
    <property type="entry name" value="aRF1_eRF1"/>
    <property type="match status" value="1"/>
</dbReference>
<dbReference type="PANTHER" id="PTHR10113">
    <property type="entry name" value="PEPTIDE CHAIN RELEASE FACTOR SUBUNIT 1"/>
    <property type="match status" value="1"/>
</dbReference>
<dbReference type="Pfam" id="PF03463">
    <property type="entry name" value="eRF1_1"/>
    <property type="match status" value="1"/>
</dbReference>
<dbReference type="Pfam" id="PF03464">
    <property type="entry name" value="eRF1_2"/>
    <property type="match status" value="1"/>
</dbReference>
<dbReference type="Pfam" id="PF03465">
    <property type="entry name" value="eRF1_3"/>
    <property type="match status" value="1"/>
</dbReference>
<dbReference type="SMART" id="SM01194">
    <property type="entry name" value="eRF1_1"/>
    <property type="match status" value="1"/>
</dbReference>
<dbReference type="SUPFAM" id="SSF55315">
    <property type="entry name" value="L30e-like"/>
    <property type="match status" value="1"/>
</dbReference>
<dbReference type="SUPFAM" id="SSF55481">
    <property type="entry name" value="N-terminal domain of eukaryotic peptide chain release factor subunit 1, ERF1"/>
    <property type="match status" value="1"/>
</dbReference>
<dbReference type="SUPFAM" id="SSF53137">
    <property type="entry name" value="Translational machinery components"/>
    <property type="match status" value="1"/>
</dbReference>
<accession>D2K759</accession>
<keyword id="KW-0007">Acetylation</keyword>
<keyword id="KW-0963">Cytoplasm</keyword>
<keyword id="KW-0341">Growth regulation</keyword>
<keyword id="KW-0648">Protein biosynthesis</keyword>
<comment type="function">
    <text evidence="1 3">Directs the termination of nascent peptide synthesis (translation) in response to the termination codons UAA, UAG and UGA (By similarity). Modulates plant growth and development (PubMed:21175633).</text>
</comment>
<comment type="subunit">
    <text evidence="3 5">Heterodimer of two subunits, one of which binds GTP (Probable). Interacts with OR (PubMed:21175633).</text>
</comment>
<comment type="subcellular location">
    <subcellularLocation>
        <location evidence="1">Cytoplasm</location>
    </subcellularLocation>
</comment>
<comment type="miscellaneous">
    <text evidence="3">Plants silencing ERF1-2 show increased elongation of the leaf petiole.</text>
</comment>
<comment type="similarity">
    <text evidence="5">Belongs to the eukaryotic release factor 1 family.</text>
</comment>
<feature type="initiator methionine" description="Removed" evidence="2">
    <location>
        <position position="1"/>
    </location>
</feature>
<feature type="chain" id="PRO_0000438018" description="Eukaryotic peptide chain release factor subunit 1-2">
    <location>
        <begin position="2"/>
        <end position="435"/>
    </location>
</feature>
<feature type="modified residue" description="N-acetylalanine" evidence="2">
    <location>
        <position position="2"/>
    </location>
</feature>
<sequence>MADQEADTNIEIWKIKKLIKGLESARGNGTSMISLIMPPRDQVSRVTKMLGDEYGTASNIKSRVNRQSVLSAITSAQQRLKLYNKVPTNGLVLYTGTIVNDDGKEKKVTFDFEPFRPINASLYLCDNKFHTGALNELLESDDKFGFIVMDGNGTLFGTLSGNTREVLHKFTVDLPKKHGRGGQSALRFARLRMEKRHNYVRKTAELATQFYINPATSQPNVAGLILAGSADFKTELSQSELFDPRLQAKILNVVDVSYGGENGFNQAIELSAEILSNVKFIQEKKLIGKYFEEISQDTGKYVFGVEDTLKALEMGAIETLIVWENLDINRYELKNSTSGEIVVKHFGKDQETDQSNFHDAETNAELEVQEKMPLLEWFANEYKRFGCTLEFVTNKSQEGSQFCRGFGGIGGMLRYQLDMRTFDELSDGEVYEDSD</sequence>
<reference key="1">
    <citation type="journal article" date="2011" name="New Phytol.">
        <title>The cauliflower Orange gene enhances petiole elongation by suppressing expression of eukaryotic release factor 1.</title>
        <authorList>
            <person name="Zhou X."/>
            <person name="Sun T.H."/>
            <person name="Wang N."/>
            <person name="Ling H.Q."/>
            <person name="Lu S."/>
            <person name="Li L."/>
        </authorList>
    </citation>
    <scope>NUCLEOTIDE SEQUENCE [MRNA]</scope>
    <scope>FUNCTION</scope>
    <scope>INTERACTION WITH OR</scope>
</reference>
<name>ERF1Y_BRAOB</name>
<organism>
    <name type="scientific">Brassica oleracea var. botrytis</name>
    <name type="common">Cauliflower</name>
    <dbReference type="NCBI Taxonomy" id="3715"/>
    <lineage>
        <taxon>Eukaryota</taxon>
        <taxon>Viridiplantae</taxon>
        <taxon>Streptophyta</taxon>
        <taxon>Embryophyta</taxon>
        <taxon>Tracheophyta</taxon>
        <taxon>Spermatophyta</taxon>
        <taxon>Magnoliopsida</taxon>
        <taxon>eudicotyledons</taxon>
        <taxon>Gunneridae</taxon>
        <taxon>Pentapetalae</taxon>
        <taxon>rosids</taxon>
        <taxon>malvids</taxon>
        <taxon>Brassicales</taxon>
        <taxon>Brassicaceae</taxon>
        <taxon>Brassiceae</taxon>
        <taxon>Brassica</taxon>
    </lineage>
</organism>